<evidence type="ECO:0000255" key="1">
    <source>
        <dbReference type="HAMAP-Rule" id="MF_01212"/>
    </source>
</evidence>
<evidence type="ECO:0000255" key="2">
    <source>
        <dbReference type="PROSITE-ProRule" id="PRU01175"/>
    </source>
</evidence>
<evidence type="ECO:0000256" key="3">
    <source>
        <dbReference type="SAM" id="MobiDB-lite"/>
    </source>
</evidence>
<feature type="chain" id="PRO_0000205319" description="Deoxyguanosinetriphosphate triphosphohydrolase-like protein">
    <location>
        <begin position="1"/>
        <end position="441"/>
    </location>
</feature>
<feature type="domain" description="HD" evidence="2">
    <location>
        <begin position="59"/>
        <end position="252"/>
    </location>
</feature>
<feature type="region of interest" description="Disordered" evidence="3">
    <location>
        <begin position="1"/>
        <end position="27"/>
    </location>
</feature>
<feature type="compositionally biased region" description="Basic and acidic residues" evidence="3">
    <location>
        <begin position="7"/>
        <end position="27"/>
    </location>
</feature>
<keyword id="KW-0378">Hydrolase</keyword>
<keyword id="KW-1185">Reference proteome</keyword>
<organism>
    <name type="scientific">Shewanella oneidensis (strain ATCC 700550 / JCM 31522 / CIP 106686 / LMG 19005 / NCIMB 14063 / MR-1)</name>
    <dbReference type="NCBI Taxonomy" id="211586"/>
    <lineage>
        <taxon>Bacteria</taxon>
        <taxon>Pseudomonadati</taxon>
        <taxon>Pseudomonadota</taxon>
        <taxon>Gammaproteobacteria</taxon>
        <taxon>Alteromonadales</taxon>
        <taxon>Shewanellaceae</taxon>
        <taxon>Shewanella</taxon>
    </lineage>
</organism>
<comment type="similarity">
    <text evidence="1">Belongs to the dGTPase family. Type 2 subfamily.</text>
</comment>
<reference key="1">
    <citation type="journal article" date="2002" name="Nat. Biotechnol.">
        <title>Genome sequence of the dissimilatory metal ion-reducing bacterium Shewanella oneidensis.</title>
        <authorList>
            <person name="Heidelberg J.F."/>
            <person name="Paulsen I.T."/>
            <person name="Nelson K.E."/>
            <person name="Gaidos E.J."/>
            <person name="Nelson W.C."/>
            <person name="Read T.D."/>
            <person name="Eisen J.A."/>
            <person name="Seshadri R."/>
            <person name="Ward N.L."/>
            <person name="Methe B.A."/>
            <person name="Clayton R.A."/>
            <person name="Meyer T."/>
            <person name="Tsapin A."/>
            <person name="Scott J."/>
            <person name="Beanan M.J."/>
            <person name="Brinkac L.M."/>
            <person name="Daugherty S.C."/>
            <person name="DeBoy R.T."/>
            <person name="Dodson R.J."/>
            <person name="Durkin A.S."/>
            <person name="Haft D.H."/>
            <person name="Kolonay J.F."/>
            <person name="Madupu R."/>
            <person name="Peterson J.D."/>
            <person name="Umayam L.A."/>
            <person name="White O."/>
            <person name="Wolf A.M."/>
            <person name="Vamathevan J.J."/>
            <person name="Weidman J.F."/>
            <person name="Impraim M."/>
            <person name="Lee K."/>
            <person name="Berry K.J."/>
            <person name="Lee C."/>
            <person name="Mueller J."/>
            <person name="Khouri H.M."/>
            <person name="Gill J."/>
            <person name="Utterback T.R."/>
            <person name="McDonald L.A."/>
            <person name="Feldblyum T.V."/>
            <person name="Smith H.O."/>
            <person name="Venter J.C."/>
            <person name="Nealson K.H."/>
            <person name="Fraser C.M."/>
        </authorList>
    </citation>
    <scope>NUCLEOTIDE SEQUENCE [LARGE SCALE GENOMIC DNA]</scope>
    <source>
        <strain>ATCC 700550 / JCM 31522 / CIP 106686 / LMG 19005 / NCIMB 14063 / MR-1</strain>
    </source>
</reference>
<protein>
    <recommendedName>
        <fullName evidence="1">Deoxyguanosinetriphosphate triphosphohydrolase-like protein</fullName>
    </recommendedName>
</protein>
<accession>Q8EEA2</accession>
<gene>
    <name type="ordered locus">SO_2485</name>
</gene>
<dbReference type="EMBL" id="AE014299">
    <property type="protein sequence ID" value="AAN55516.1"/>
    <property type="molecule type" value="Genomic_DNA"/>
</dbReference>
<dbReference type="RefSeq" id="NP_718072.1">
    <property type="nucleotide sequence ID" value="NC_004347.2"/>
</dbReference>
<dbReference type="SMR" id="Q8EEA2"/>
<dbReference type="STRING" id="211586.SO_2485"/>
<dbReference type="PaxDb" id="211586-SO_2485"/>
<dbReference type="KEGG" id="son:SO_2485"/>
<dbReference type="PATRIC" id="fig|211586.12.peg.2393"/>
<dbReference type="eggNOG" id="COG0232">
    <property type="taxonomic scope" value="Bacteria"/>
</dbReference>
<dbReference type="HOGENOM" id="CLU_028163_0_0_6"/>
<dbReference type="OrthoDB" id="9803619at2"/>
<dbReference type="PhylomeDB" id="Q8EEA2"/>
<dbReference type="BioCyc" id="SONE211586:G1GMP-2270-MONOMER"/>
<dbReference type="Proteomes" id="UP000008186">
    <property type="component" value="Chromosome"/>
</dbReference>
<dbReference type="GO" id="GO:0008832">
    <property type="term" value="F:dGTPase activity"/>
    <property type="evidence" value="ECO:0000318"/>
    <property type="project" value="GO_Central"/>
</dbReference>
<dbReference type="GO" id="GO:0006203">
    <property type="term" value="P:dGTP catabolic process"/>
    <property type="evidence" value="ECO:0000318"/>
    <property type="project" value="GO_Central"/>
</dbReference>
<dbReference type="CDD" id="cd00077">
    <property type="entry name" value="HDc"/>
    <property type="match status" value="1"/>
</dbReference>
<dbReference type="Gene3D" id="1.10.3210.10">
    <property type="entry name" value="Hypothetical protein af1432"/>
    <property type="match status" value="2"/>
</dbReference>
<dbReference type="HAMAP" id="MF_01212">
    <property type="entry name" value="dGTPase_type2"/>
    <property type="match status" value="1"/>
</dbReference>
<dbReference type="InterPro" id="IPR006261">
    <property type="entry name" value="dGTPase"/>
</dbReference>
<dbReference type="InterPro" id="IPR050135">
    <property type="entry name" value="dGTPase-like"/>
</dbReference>
<dbReference type="InterPro" id="IPR023023">
    <property type="entry name" value="dNTPase_2"/>
</dbReference>
<dbReference type="InterPro" id="IPR003607">
    <property type="entry name" value="HD/PDEase_dom"/>
</dbReference>
<dbReference type="InterPro" id="IPR006674">
    <property type="entry name" value="HD_domain"/>
</dbReference>
<dbReference type="InterPro" id="IPR026875">
    <property type="entry name" value="PHydrolase_assoc_dom"/>
</dbReference>
<dbReference type="NCBIfam" id="NF041026">
    <property type="entry name" value="antiphage_dGTPase"/>
    <property type="match status" value="1"/>
</dbReference>
<dbReference type="NCBIfam" id="TIGR01353">
    <property type="entry name" value="dGTP_triPase"/>
    <property type="match status" value="1"/>
</dbReference>
<dbReference type="NCBIfam" id="NF003701">
    <property type="entry name" value="PRK05318.1"/>
    <property type="match status" value="1"/>
</dbReference>
<dbReference type="PANTHER" id="PTHR11373:SF40">
    <property type="entry name" value="DEOXYGUANOSINETRIPHOSPHATE TRIPHOSPHOHYDROLASE-LIKE PROTEIN 2"/>
    <property type="match status" value="1"/>
</dbReference>
<dbReference type="PANTHER" id="PTHR11373">
    <property type="entry name" value="DEOXYNUCLEOSIDE TRIPHOSPHATE TRIPHOSPHOHYDROLASE"/>
    <property type="match status" value="1"/>
</dbReference>
<dbReference type="Pfam" id="PF01966">
    <property type="entry name" value="HD"/>
    <property type="match status" value="1"/>
</dbReference>
<dbReference type="Pfam" id="PF13286">
    <property type="entry name" value="HD_assoc"/>
    <property type="match status" value="1"/>
</dbReference>
<dbReference type="SMART" id="SM00471">
    <property type="entry name" value="HDc"/>
    <property type="match status" value="1"/>
</dbReference>
<dbReference type="SUPFAM" id="SSF109604">
    <property type="entry name" value="HD-domain/PDEase-like"/>
    <property type="match status" value="1"/>
</dbReference>
<dbReference type="PROSITE" id="PS51831">
    <property type="entry name" value="HD"/>
    <property type="match status" value="1"/>
</dbReference>
<sequence>MTSSVWQERRHGEDKQRRNDHRSPYQRDRARILHSAAFRRLQAKTQVLGVGMNDFYRTRLTHSLEVSQIGTGIAAQLSRKYPEHKPLLDSMSLLESLCLAHDIGHPPFGHGGEVALNYMMRHHGGFEGNGQTFRILSKLEPYTLDFGMNLCRRTMLGILKYPAPQSSLFIAGNHHEITNHRQLKPSQWPPVKGIFDDDNDIFDWVLEPLSAADRTRFTSAQPSIQPNYPHLRTQFKSFDCSIMELADDIAYAVHDLEDAIVMGIVTASQWQQDVAPTFEHSNDPWIRQELADIGTKLFSHEHHLRKDAIGTLVNGFVTAIIITDDGVFEEPLLRFNASLEVEFAHALNVLKQLVYKYVIRKPEIQMLEYKGQQIVMGLFEAFASDPERLLPLNTQERWRASEQLGLNSHRILADYISGMTDEFAGRLYQQLFTLRLDRTWS</sequence>
<proteinExistence type="inferred from homology"/>
<name>DGTL1_SHEON</name>